<keyword id="KW-0227">DNA damage</keyword>
<keyword id="KW-0234">DNA repair</keyword>
<keyword id="KW-0378">Hydrolase</keyword>
<keyword id="KW-1185">Reference proteome</keyword>
<feature type="chain" id="PRO_1000050980" description="Putative 3-methyladenine DNA glycosylase">
    <location>
        <begin position="1"/>
        <end position="194"/>
    </location>
</feature>
<proteinExistence type="inferred from homology"/>
<dbReference type="EC" id="3.2.2.-" evidence="1"/>
<dbReference type="EMBL" id="CP000769">
    <property type="protein sequence ID" value="ABS28558.1"/>
    <property type="molecule type" value="Genomic_DNA"/>
</dbReference>
<dbReference type="SMR" id="A7HIL2"/>
<dbReference type="STRING" id="404589.Anae109_4380"/>
<dbReference type="KEGG" id="afw:Anae109_4380"/>
<dbReference type="eggNOG" id="COG2094">
    <property type="taxonomic scope" value="Bacteria"/>
</dbReference>
<dbReference type="HOGENOM" id="CLU_060471_4_1_7"/>
<dbReference type="OrthoDB" id="9794313at2"/>
<dbReference type="Proteomes" id="UP000006382">
    <property type="component" value="Chromosome"/>
</dbReference>
<dbReference type="GO" id="GO:0003905">
    <property type="term" value="F:alkylbase DNA N-glycosylase activity"/>
    <property type="evidence" value="ECO:0007669"/>
    <property type="project" value="InterPro"/>
</dbReference>
<dbReference type="GO" id="GO:0003677">
    <property type="term" value="F:DNA binding"/>
    <property type="evidence" value="ECO:0007669"/>
    <property type="project" value="InterPro"/>
</dbReference>
<dbReference type="GO" id="GO:0006284">
    <property type="term" value="P:base-excision repair"/>
    <property type="evidence" value="ECO:0007669"/>
    <property type="project" value="InterPro"/>
</dbReference>
<dbReference type="CDD" id="cd00540">
    <property type="entry name" value="AAG"/>
    <property type="match status" value="1"/>
</dbReference>
<dbReference type="FunFam" id="3.10.300.10:FF:000001">
    <property type="entry name" value="Putative 3-methyladenine DNA glycosylase"/>
    <property type="match status" value="1"/>
</dbReference>
<dbReference type="Gene3D" id="3.10.300.10">
    <property type="entry name" value="Methylpurine-DNA glycosylase (MPG)"/>
    <property type="match status" value="1"/>
</dbReference>
<dbReference type="HAMAP" id="MF_00527">
    <property type="entry name" value="3MGH"/>
    <property type="match status" value="1"/>
</dbReference>
<dbReference type="InterPro" id="IPR011034">
    <property type="entry name" value="Formyl_transferase-like_C_sf"/>
</dbReference>
<dbReference type="InterPro" id="IPR003180">
    <property type="entry name" value="MPG"/>
</dbReference>
<dbReference type="InterPro" id="IPR036995">
    <property type="entry name" value="MPG_sf"/>
</dbReference>
<dbReference type="NCBIfam" id="TIGR00567">
    <property type="entry name" value="3mg"/>
    <property type="match status" value="1"/>
</dbReference>
<dbReference type="PANTHER" id="PTHR10429">
    <property type="entry name" value="DNA-3-METHYLADENINE GLYCOSYLASE"/>
    <property type="match status" value="1"/>
</dbReference>
<dbReference type="PANTHER" id="PTHR10429:SF0">
    <property type="entry name" value="DNA-3-METHYLADENINE GLYCOSYLASE"/>
    <property type="match status" value="1"/>
</dbReference>
<dbReference type="Pfam" id="PF02245">
    <property type="entry name" value="Pur_DNA_glyco"/>
    <property type="match status" value="1"/>
</dbReference>
<dbReference type="SUPFAM" id="SSF50486">
    <property type="entry name" value="FMT C-terminal domain-like"/>
    <property type="match status" value="1"/>
</dbReference>
<protein>
    <recommendedName>
        <fullName evidence="1">Putative 3-methyladenine DNA glycosylase</fullName>
        <ecNumber evidence="1">3.2.2.-</ecNumber>
    </recommendedName>
</protein>
<accession>A7HIL2</accession>
<organism>
    <name type="scientific">Anaeromyxobacter sp. (strain Fw109-5)</name>
    <dbReference type="NCBI Taxonomy" id="404589"/>
    <lineage>
        <taxon>Bacteria</taxon>
        <taxon>Pseudomonadati</taxon>
        <taxon>Myxococcota</taxon>
        <taxon>Myxococcia</taxon>
        <taxon>Myxococcales</taxon>
        <taxon>Cystobacterineae</taxon>
        <taxon>Anaeromyxobacteraceae</taxon>
        <taxon>Anaeromyxobacter</taxon>
    </lineage>
</organism>
<gene>
    <name type="ordered locus">Anae109_4380</name>
</gene>
<sequence length="194" mass="21501">MKLAREFYARDTREVARDLLGKVLVHRDGGVRRAARIVETEAYHGPDDLASHARFGPTRRAGIMFGPAGVAYVYLIYGTSHCMNVVTGAEGFPSAVLLRAGEPVEGCLHSTRGPGNLCRALAIRREHDNGRDLAGDDLFVEDAPPPRERIVAARRVNVDYAGPWAERPWRFALEGNAFVSRAPGEWRAVRGRRR</sequence>
<evidence type="ECO:0000255" key="1">
    <source>
        <dbReference type="HAMAP-Rule" id="MF_00527"/>
    </source>
</evidence>
<name>3MGH_ANADF</name>
<comment type="similarity">
    <text evidence="1">Belongs to the DNA glycosylase MPG family.</text>
</comment>
<reference key="1">
    <citation type="journal article" date="2015" name="Genome Announc.">
        <title>Complete genome sequence of Anaeromyxobacter sp. Fw109-5, an anaerobic, metal-reducing bacterium isolated from a contaminated subsurface environment.</title>
        <authorList>
            <person name="Hwang C."/>
            <person name="Copeland A."/>
            <person name="Lucas S."/>
            <person name="Lapidus A."/>
            <person name="Barry K."/>
            <person name="Glavina Del Rio T."/>
            <person name="Dalin E."/>
            <person name="Tice H."/>
            <person name="Pitluck S."/>
            <person name="Sims D."/>
            <person name="Brettin T."/>
            <person name="Bruce D.C."/>
            <person name="Detter J.C."/>
            <person name="Han C.S."/>
            <person name="Schmutz J."/>
            <person name="Larimer F.W."/>
            <person name="Land M.L."/>
            <person name="Hauser L.J."/>
            <person name="Kyrpides N."/>
            <person name="Lykidis A."/>
            <person name="Richardson P."/>
            <person name="Belieav A."/>
            <person name="Sanford R.A."/>
            <person name="Loeffler F.E."/>
            <person name="Fields M.W."/>
        </authorList>
    </citation>
    <scope>NUCLEOTIDE SEQUENCE [LARGE SCALE GENOMIC DNA]</scope>
    <source>
        <strain>Fw109-5</strain>
    </source>
</reference>